<accession>Q2JEN8</accession>
<reference key="1">
    <citation type="journal article" date="2007" name="Genome Res.">
        <title>Genome characteristics of facultatively symbiotic Frankia sp. strains reflect host range and host plant biogeography.</title>
        <authorList>
            <person name="Normand P."/>
            <person name="Lapierre P."/>
            <person name="Tisa L.S."/>
            <person name="Gogarten J.P."/>
            <person name="Alloisio N."/>
            <person name="Bagnarol E."/>
            <person name="Bassi C.A."/>
            <person name="Berry A.M."/>
            <person name="Bickhart D.M."/>
            <person name="Choisne N."/>
            <person name="Couloux A."/>
            <person name="Cournoyer B."/>
            <person name="Cruveiller S."/>
            <person name="Daubin V."/>
            <person name="Demange N."/>
            <person name="Francino M.P."/>
            <person name="Goltsman E."/>
            <person name="Huang Y."/>
            <person name="Kopp O.R."/>
            <person name="Labarre L."/>
            <person name="Lapidus A."/>
            <person name="Lavire C."/>
            <person name="Marechal J."/>
            <person name="Martinez M."/>
            <person name="Mastronunzio J.E."/>
            <person name="Mullin B.C."/>
            <person name="Niemann J."/>
            <person name="Pujic P."/>
            <person name="Rawnsley T."/>
            <person name="Rouy Z."/>
            <person name="Schenowitz C."/>
            <person name="Sellstedt A."/>
            <person name="Tavares F."/>
            <person name="Tomkins J.P."/>
            <person name="Vallenet D."/>
            <person name="Valverde C."/>
            <person name="Wall L.G."/>
            <person name="Wang Y."/>
            <person name="Medigue C."/>
            <person name="Benson D.R."/>
        </authorList>
    </citation>
    <scope>NUCLEOTIDE SEQUENCE [LARGE SCALE GENOMIC DNA]</scope>
    <source>
        <strain>DSM 45818 / CECT 9043 / HFP020203 / CcI3</strain>
    </source>
</reference>
<protein>
    <recommendedName>
        <fullName evidence="1">Ribonuclease PH</fullName>
        <shortName evidence="1">RNase PH</shortName>
        <ecNumber evidence="1">2.7.7.56</ecNumber>
    </recommendedName>
    <alternativeName>
        <fullName evidence="1">tRNA nucleotidyltransferase</fullName>
    </alternativeName>
</protein>
<proteinExistence type="inferred from homology"/>
<sequence>MIRADGRRPDELRQVTILRGWQEHAEGSALISAGRTRVLCAASVTTGVPRWRKGSGLGWVTAEYSMLPRATDTRNDRESVRGRISGRTHEISRLIGRSLRACIDLKALGENTIAIDCDVLLADGGTRTAAITGAYVALVDAARWLGRPDAIITSVSAVSVGVVKGEAMLDLAYSEDSTADTDMNVVCTGADGFVEVQGTAEGTPFDRTMLDSLLDLAVRGCAQLTAIQTEALRGPVPAGPPRPGGAR</sequence>
<dbReference type="EC" id="2.7.7.56" evidence="1"/>
<dbReference type="EMBL" id="CP000249">
    <property type="protein sequence ID" value="ABD10254.1"/>
    <property type="molecule type" value="Genomic_DNA"/>
</dbReference>
<dbReference type="RefSeq" id="WP_011435323.1">
    <property type="nucleotide sequence ID" value="NZ_JENI01000002.1"/>
</dbReference>
<dbReference type="SMR" id="Q2JEN8"/>
<dbReference type="STRING" id="106370.Francci3_0870"/>
<dbReference type="KEGG" id="fra:Francci3_0870"/>
<dbReference type="eggNOG" id="COG0689">
    <property type="taxonomic scope" value="Bacteria"/>
</dbReference>
<dbReference type="HOGENOM" id="CLU_050858_0_0_11"/>
<dbReference type="OrthoDB" id="9802265at2"/>
<dbReference type="PhylomeDB" id="Q2JEN8"/>
<dbReference type="Proteomes" id="UP000001937">
    <property type="component" value="Chromosome"/>
</dbReference>
<dbReference type="GO" id="GO:0000175">
    <property type="term" value="F:3'-5'-RNA exonuclease activity"/>
    <property type="evidence" value="ECO:0007669"/>
    <property type="project" value="UniProtKB-UniRule"/>
</dbReference>
<dbReference type="GO" id="GO:0000049">
    <property type="term" value="F:tRNA binding"/>
    <property type="evidence" value="ECO:0007669"/>
    <property type="project" value="UniProtKB-UniRule"/>
</dbReference>
<dbReference type="GO" id="GO:0009022">
    <property type="term" value="F:tRNA nucleotidyltransferase activity"/>
    <property type="evidence" value="ECO:0007669"/>
    <property type="project" value="UniProtKB-UniRule"/>
</dbReference>
<dbReference type="GO" id="GO:0016075">
    <property type="term" value="P:rRNA catabolic process"/>
    <property type="evidence" value="ECO:0007669"/>
    <property type="project" value="UniProtKB-UniRule"/>
</dbReference>
<dbReference type="GO" id="GO:0006364">
    <property type="term" value="P:rRNA processing"/>
    <property type="evidence" value="ECO:0007669"/>
    <property type="project" value="UniProtKB-KW"/>
</dbReference>
<dbReference type="GO" id="GO:0008033">
    <property type="term" value="P:tRNA processing"/>
    <property type="evidence" value="ECO:0007669"/>
    <property type="project" value="UniProtKB-UniRule"/>
</dbReference>
<dbReference type="FunFam" id="3.30.230.70:FF:000003">
    <property type="entry name" value="Ribonuclease PH"/>
    <property type="match status" value="1"/>
</dbReference>
<dbReference type="Gene3D" id="3.30.230.70">
    <property type="entry name" value="GHMP Kinase, N-terminal domain"/>
    <property type="match status" value="1"/>
</dbReference>
<dbReference type="HAMAP" id="MF_00564">
    <property type="entry name" value="RNase_PH"/>
    <property type="match status" value="1"/>
</dbReference>
<dbReference type="InterPro" id="IPR001247">
    <property type="entry name" value="ExoRNase_PH_dom1"/>
</dbReference>
<dbReference type="InterPro" id="IPR015847">
    <property type="entry name" value="ExoRNase_PH_dom2"/>
</dbReference>
<dbReference type="InterPro" id="IPR036345">
    <property type="entry name" value="ExoRNase_PH_dom2_sf"/>
</dbReference>
<dbReference type="InterPro" id="IPR027408">
    <property type="entry name" value="PNPase/RNase_PH_dom_sf"/>
</dbReference>
<dbReference type="InterPro" id="IPR020568">
    <property type="entry name" value="Ribosomal_Su5_D2-typ_SF"/>
</dbReference>
<dbReference type="InterPro" id="IPR050080">
    <property type="entry name" value="RNase_PH"/>
</dbReference>
<dbReference type="InterPro" id="IPR002381">
    <property type="entry name" value="RNase_PH_bac-type"/>
</dbReference>
<dbReference type="NCBIfam" id="TIGR01966">
    <property type="entry name" value="RNasePH"/>
    <property type="match status" value="1"/>
</dbReference>
<dbReference type="PANTHER" id="PTHR11953">
    <property type="entry name" value="EXOSOME COMPLEX COMPONENT"/>
    <property type="match status" value="1"/>
</dbReference>
<dbReference type="PANTHER" id="PTHR11953:SF0">
    <property type="entry name" value="EXOSOME COMPLEX COMPONENT RRP41"/>
    <property type="match status" value="1"/>
</dbReference>
<dbReference type="Pfam" id="PF01138">
    <property type="entry name" value="RNase_PH"/>
    <property type="match status" value="1"/>
</dbReference>
<dbReference type="Pfam" id="PF03725">
    <property type="entry name" value="RNase_PH_C"/>
    <property type="match status" value="1"/>
</dbReference>
<dbReference type="SUPFAM" id="SSF55666">
    <property type="entry name" value="Ribonuclease PH domain 2-like"/>
    <property type="match status" value="1"/>
</dbReference>
<dbReference type="SUPFAM" id="SSF54211">
    <property type="entry name" value="Ribosomal protein S5 domain 2-like"/>
    <property type="match status" value="1"/>
</dbReference>
<keyword id="KW-0548">Nucleotidyltransferase</keyword>
<keyword id="KW-1185">Reference proteome</keyword>
<keyword id="KW-0694">RNA-binding</keyword>
<keyword id="KW-0698">rRNA processing</keyword>
<keyword id="KW-0808">Transferase</keyword>
<keyword id="KW-0819">tRNA processing</keyword>
<keyword id="KW-0820">tRNA-binding</keyword>
<organism>
    <name type="scientific">Frankia casuarinae (strain DSM 45818 / CECT 9043 / HFP020203 / CcI3)</name>
    <dbReference type="NCBI Taxonomy" id="106370"/>
    <lineage>
        <taxon>Bacteria</taxon>
        <taxon>Bacillati</taxon>
        <taxon>Actinomycetota</taxon>
        <taxon>Actinomycetes</taxon>
        <taxon>Frankiales</taxon>
        <taxon>Frankiaceae</taxon>
        <taxon>Frankia</taxon>
    </lineage>
</organism>
<feature type="chain" id="PRO_1000024805" description="Ribonuclease PH">
    <location>
        <begin position="1"/>
        <end position="247"/>
    </location>
</feature>
<feature type="binding site" evidence="1">
    <location>
        <position position="87"/>
    </location>
    <ligand>
        <name>phosphate</name>
        <dbReference type="ChEBI" id="CHEBI:43474"/>
        <note>substrate</note>
    </ligand>
</feature>
<feature type="binding site" evidence="1">
    <location>
        <begin position="125"/>
        <end position="127"/>
    </location>
    <ligand>
        <name>phosphate</name>
        <dbReference type="ChEBI" id="CHEBI:43474"/>
        <note>substrate</note>
    </ligand>
</feature>
<comment type="function">
    <text evidence="1">Phosphorolytic 3'-5' exoribonuclease that plays an important role in tRNA 3'-end maturation. Removes nucleotide residues following the 3'-CCA terminus of tRNAs; can also add nucleotides to the ends of RNA molecules by using nucleoside diphosphates as substrates, but this may not be physiologically important. Probably plays a role in initiation of 16S rRNA degradation (leading to ribosome degradation) during starvation.</text>
</comment>
<comment type="catalytic activity">
    <reaction evidence="1">
        <text>tRNA(n+1) + phosphate = tRNA(n) + a ribonucleoside 5'-diphosphate</text>
        <dbReference type="Rhea" id="RHEA:10628"/>
        <dbReference type="Rhea" id="RHEA-COMP:17343"/>
        <dbReference type="Rhea" id="RHEA-COMP:17344"/>
        <dbReference type="ChEBI" id="CHEBI:43474"/>
        <dbReference type="ChEBI" id="CHEBI:57930"/>
        <dbReference type="ChEBI" id="CHEBI:173114"/>
        <dbReference type="EC" id="2.7.7.56"/>
    </reaction>
</comment>
<comment type="subunit">
    <text evidence="1">Homohexameric ring arranged as a trimer of dimers.</text>
</comment>
<comment type="similarity">
    <text evidence="1">Belongs to the RNase PH family.</text>
</comment>
<evidence type="ECO:0000255" key="1">
    <source>
        <dbReference type="HAMAP-Rule" id="MF_00564"/>
    </source>
</evidence>
<name>RNPH_FRACC</name>
<gene>
    <name evidence="1" type="primary">rph</name>
    <name type="ordered locus">Francci3_0870</name>
</gene>